<reference key="1">
    <citation type="journal article" date="2005" name="Nature">
        <title>The genome of the social amoeba Dictyostelium discoideum.</title>
        <authorList>
            <person name="Eichinger L."/>
            <person name="Pachebat J.A."/>
            <person name="Gloeckner G."/>
            <person name="Rajandream M.A."/>
            <person name="Sucgang R."/>
            <person name="Berriman M."/>
            <person name="Song J."/>
            <person name="Olsen R."/>
            <person name="Szafranski K."/>
            <person name="Xu Q."/>
            <person name="Tunggal B."/>
            <person name="Kummerfeld S."/>
            <person name="Madera M."/>
            <person name="Konfortov B.A."/>
            <person name="Rivero F."/>
            <person name="Bankier A.T."/>
            <person name="Lehmann R."/>
            <person name="Hamlin N."/>
            <person name="Davies R."/>
            <person name="Gaudet P."/>
            <person name="Fey P."/>
            <person name="Pilcher K."/>
            <person name="Chen G."/>
            <person name="Saunders D."/>
            <person name="Sodergren E.J."/>
            <person name="Davis P."/>
            <person name="Kerhornou A."/>
            <person name="Nie X."/>
            <person name="Hall N."/>
            <person name="Anjard C."/>
            <person name="Hemphill L."/>
            <person name="Bason N."/>
            <person name="Farbrother P."/>
            <person name="Desany B."/>
            <person name="Just E."/>
            <person name="Morio T."/>
            <person name="Rost R."/>
            <person name="Churcher C.M."/>
            <person name="Cooper J."/>
            <person name="Haydock S."/>
            <person name="van Driessche N."/>
            <person name="Cronin A."/>
            <person name="Goodhead I."/>
            <person name="Muzny D.M."/>
            <person name="Mourier T."/>
            <person name="Pain A."/>
            <person name="Lu M."/>
            <person name="Harper D."/>
            <person name="Lindsay R."/>
            <person name="Hauser H."/>
            <person name="James K.D."/>
            <person name="Quiles M."/>
            <person name="Madan Babu M."/>
            <person name="Saito T."/>
            <person name="Buchrieser C."/>
            <person name="Wardroper A."/>
            <person name="Felder M."/>
            <person name="Thangavelu M."/>
            <person name="Johnson D."/>
            <person name="Knights A."/>
            <person name="Loulseged H."/>
            <person name="Mungall K.L."/>
            <person name="Oliver K."/>
            <person name="Price C."/>
            <person name="Quail M.A."/>
            <person name="Urushihara H."/>
            <person name="Hernandez J."/>
            <person name="Rabbinowitsch E."/>
            <person name="Steffen D."/>
            <person name="Sanders M."/>
            <person name="Ma J."/>
            <person name="Kohara Y."/>
            <person name="Sharp S."/>
            <person name="Simmonds M.N."/>
            <person name="Spiegler S."/>
            <person name="Tivey A."/>
            <person name="Sugano S."/>
            <person name="White B."/>
            <person name="Walker D."/>
            <person name="Woodward J.R."/>
            <person name="Winckler T."/>
            <person name="Tanaka Y."/>
            <person name="Shaulsky G."/>
            <person name="Schleicher M."/>
            <person name="Weinstock G.M."/>
            <person name="Rosenthal A."/>
            <person name="Cox E.C."/>
            <person name="Chisholm R.L."/>
            <person name="Gibbs R.A."/>
            <person name="Loomis W.F."/>
            <person name="Platzer M."/>
            <person name="Kay R.R."/>
            <person name="Williams J.G."/>
            <person name="Dear P.H."/>
            <person name="Noegel A.A."/>
            <person name="Barrell B.G."/>
            <person name="Kuspa A."/>
        </authorList>
    </citation>
    <scope>NUCLEOTIDE SEQUENCE [LARGE SCALE GENOMIC DNA]</scope>
    <source>
        <strain>AX4</strain>
    </source>
</reference>
<keyword id="KW-1185">Reference proteome</keyword>
<organism>
    <name type="scientific">Dictyostelium discoideum</name>
    <name type="common">Social amoeba</name>
    <dbReference type="NCBI Taxonomy" id="44689"/>
    <lineage>
        <taxon>Eukaryota</taxon>
        <taxon>Amoebozoa</taxon>
        <taxon>Evosea</taxon>
        <taxon>Eumycetozoa</taxon>
        <taxon>Dictyostelia</taxon>
        <taxon>Dictyosteliales</taxon>
        <taxon>Dictyosteliaceae</taxon>
        <taxon>Dictyostelium</taxon>
    </lineage>
</organism>
<proteinExistence type="predicted"/>
<protein>
    <recommendedName>
        <fullName>Putative uncharacterized protein DDB_G0284929</fullName>
    </recommendedName>
</protein>
<sequence>MVIHIEGSNYVQSAILPHYIQATHKEDLLFDLDLNYLFNLGIVTFERVLGLIETLNQQEQQQQNNIAIVVQKQQETTFTILK</sequence>
<dbReference type="EMBL" id="AAFI02000073">
    <property type="protein sequence ID" value="EAL64928.1"/>
    <property type="molecule type" value="Genomic_DNA"/>
</dbReference>
<dbReference type="RefSeq" id="XP_639938.1">
    <property type="nucleotide sequence ID" value="XM_634846.1"/>
</dbReference>
<dbReference type="PaxDb" id="44689-DDB0186263"/>
<dbReference type="EnsemblProtists" id="EAL64928">
    <property type="protein sequence ID" value="EAL64928"/>
    <property type="gene ID" value="DDB_G0284929"/>
</dbReference>
<dbReference type="GeneID" id="8624850"/>
<dbReference type="KEGG" id="ddi:DDB_G0284929"/>
<dbReference type="dictyBase" id="DDB_G0284929"/>
<dbReference type="VEuPathDB" id="AmoebaDB:DDB_G0284929"/>
<dbReference type="HOGENOM" id="CLU_2563217_0_0_1"/>
<dbReference type="InParanoid" id="Q54NX9"/>
<dbReference type="PRO" id="PR:Q54NX9"/>
<dbReference type="Proteomes" id="UP000002195">
    <property type="component" value="Chromosome 4"/>
</dbReference>
<gene>
    <name type="ORF">DDB_G0284929</name>
</gene>
<accession>Q54NX9</accession>
<name>Y6263_DICDI</name>
<feature type="chain" id="PRO_0000350790" description="Putative uncharacterized protein DDB_G0284929">
    <location>
        <begin position="1"/>
        <end position="82"/>
    </location>
</feature>